<sequence>MFTYHSANTSAAQPALVNAIEQGLRAELGVVTEDDILMELTKWVEASDNDILSDIYQQTINYVVSGQHPTL</sequence>
<accession>P65642</accession>
<accession>Q8XFJ2</accession>
<proteinExistence type="predicted"/>
<protein>
    <recommendedName>
        <fullName>Protein bdm homolog</fullName>
    </recommendedName>
</protein>
<name>BDM_SALTI</name>
<dbReference type="EMBL" id="AL513382">
    <property type="protein sequence ID" value="CAD01756.1"/>
    <property type="molecule type" value="Genomic_DNA"/>
</dbReference>
<dbReference type="EMBL" id="AE014613">
    <property type="protein sequence ID" value="AAO69117.1"/>
    <property type="molecule type" value="Genomic_DNA"/>
</dbReference>
<dbReference type="RefSeq" id="NP_455926.1">
    <property type="nucleotide sequence ID" value="NC_003198.1"/>
</dbReference>
<dbReference type="RefSeq" id="WP_000495700.1">
    <property type="nucleotide sequence ID" value="NZ_WSUR01000006.1"/>
</dbReference>
<dbReference type="SMR" id="P65642"/>
<dbReference type="STRING" id="220341.gene:17585446"/>
<dbReference type="GeneID" id="66756002"/>
<dbReference type="KEGG" id="stt:t1479"/>
<dbReference type="KEGG" id="sty:STY1496"/>
<dbReference type="PATRIC" id="fig|220341.7.peg.1506"/>
<dbReference type="eggNOG" id="ENOG5032SK6">
    <property type="taxonomic scope" value="Bacteria"/>
</dbReference>
<dbReference type="HOGENOM" id="CLU_186729_0_0_6"/>
<dbReference type="OMA" id="THYSANT"/>
<dbReference type="OrthoDB" id="6607066at2"/>
<dbReference type="Proteomes" id="UP000000541">
    <property type="component" value="Chromosome"/>
</dbReference>
<dbReference type="Proteomes" id="UP000002670">
    <property type="component" value="Chromosome"/>
</dbReference>
<dbReference type="InterPro" id="IPR019625">
    <property type="entry name" value="Biofilm-dep_modulation_Bdm_put"/>
</dbReference>
<dbReference type="NCBIfam" id="NF008515">
    <property type="entry name" value="PRK11436.1"/>
    <property type="match status" value="1"/>
</dbReference>
<dbReference type="Pfam" id="PF10684">
    <property type="entry name" value="BDM"/>
    <property type="match status" value="1"/>
</dbReference>
<reference key="1">
    <citation type="journal article" date="2001" name="Nature">
        <title>Complete genome sequence of a multiple drug resistant Salmonella enterica serovar Typhi CT18.</title>
        <authorList>
            <person name="Parkhill J."/>
            <person name="Dougan G."/>
            <person name="James K.D."/>
            <person name="Thomson N.R."/>
            <person name="Pickard D."/>
            <person name="Wain J."/>
            <person name="Churcher C.M."/>
            <person name="Mungall K.L."/>
            <person name="Bentley S.D."/>
            <person name="Holden M.T.G."/>
            <person name="Sebaihia M."/>
            <person name="Baker S."/>
            <person name="Basham D."/>
            <person name="Brooks K."/>
            <person name="Chillingworth T."/>
            <person name="Connerton P."/>
            <person name="Cronin A."/>
            <person name="Davis P."/>
            <person name="Davies R.M."/>
            <person name="Dowd L."/>
            <person name="White N."/>
            <person name="Farrar J."/>
            <person name="Feltwell T."/>
            <person name="Hamlin N."/>
            <person name="Haque A."/>
            <person name="Hien T.T."/>
            <person name="Holroyd S."/>
            <person name="Jagels K."/>
            <person name="Krogh A."/>
            <person name="Larsen T.S."/>
            <person name="Leather S."/>
            <person name="Moule S."/>
            <person name="O'Gaora P."/>
            <person name="Parry C."/>
            <person name="Quail M.A."/>
            <person name="Rutherford K.M."/>
            <person name="Simmonds M."/>
            <person name="Skelton J."/>
            <person name="Stevens K."/>
            <person name="Whitehead S."/>
            <person name="Barrell B.G."/>
        </authorList>
    </citation>
    <scope>NUCLEOTIDE SEQUENCE [LARGE SCALE GENOMIC DNA]</scope>
    <source>
        <strain>CT18</strain>
    </source>
</reference>
<reference key="2">
    <citation type="journal article" date="2003" name="J. Bacteriol.">
        <title>Comparative genomics of Salmonella enterica serovar Typhi strains Ty2 and CT18.</title>
        <authorList>
            <person name="Deng W."/>
            <person name="Liou S.-R."/>
            <person name="Plunkett G. III"/>
            <person name="Mayhew G.F."/>
            <person name="Rose D.J."/>
            <person name="Burland V."/>
            <person name="Kodoyianni V."/>
            <person name="Schwartz D.C."/>
            <person name="Blattner F.R."/>
        </authorList>
    </citation>
    <scope>NUCLEOTIDE SEQUENCE [LARGE SCALE GENOMIC DNA]</scope>
    <source>
        <strain>ATCC 700931 / Ty2</strain>
    </source>
</reference>
<organism>
    <name type="scientific">Salmonella typhi</name>
    <dbReference type="NCBI Taxonomy" id="90370"/>
    <lineage>
        <taxon>Bacteria</taxon>
        <taxon>Pseudomonadati</taxon>
        <taxon>Pseudomonadota</taxon>
        <taxon>Gammaproteobacteria</taxon>
        <taxon>Enterobacterales</taxon>
        <taxon>Enterobacteriaceae</taxon>
        <taxon>Salmonella</taxon>
    </lineage>
</organism>
<gene>
    <name type="primary">bdm</name>
    <name type="ordered locus">STY1496</name>
    <name type="ordered locus">t1479</name>
</gene>
<feature type="chain" id="PRO_0000064902" description="Protein bdm homolog">
    <location>
        <begin position="1"/>
        <end position="71"/>
    </location>
</feature>